<comment type="function">
    <text evidence="1">Located at the top of the head of the 30S subunit, it contacts several helices of the 16S rRNA. In the 70S ribosome it contacts the 23S rRNA (bridge B1a) and protein L5 of the 50S subunit (bridge B1b), connecting the 2 subunits; these bridges are implicated in subunit movement. Contacts the tRNAs in the A and P-sites.</text>
</comment>
<comment type="subunit">
    <text evidence="1">Part of the 30S ribosomal subunit. Forms a loose heterodimer with protein S19. Forms two bridges to the 50S subunit in the 70S ribosome.</text>
</comment>
<comment type="similarity">
    <text evidence="1">Belongs to the universal ribosomal protein uS13 family.</text>
</comment>
<evidence type="ECO:0000255" key="1">
    <source>
        <dbReference type="HAMAP-Rule" id="MF_01315"/>
    </source>
</evidence>
<evidence type="ECO:0000256" key="2">
    <source>
        <dbReference type="SAM" id="MobiDB-lite"/>
    </source>
</evidence>
<evidence type="ECO:0000305" key="3"/>
<keyword id="KW-0687">Ribonucleoprotein</keyword>
<keyword id="KW-0689">Ribosomal protein</keyword>
<keyword id="KW-0694">RNA-binding</keyword>
<keyword id="KW-0699">rRNA-binding</keyword>
<keyword id="KW-0820">tRNA-binding</keyword>
<proteinExistence type="inferred from homology"/>
<name>RS13_PROA2</name>
<dbReference type="EMBL" id="CP001108">
    <property type="protein sequence ID" value="ACF47050.1"/>
    <property type="molecule type" value="Genomic_DNA"/>
</dbReference>
<dbReference type="RefSeq" id="WP_012506583.1">
    <property type="nucleotide sequence ID" value="NC_011059.1"/>
</dbReference>
<dbReference type="SMR" id="B4S5A4"/>
<dbReference type="STRING" id="290512.Paes_2040"/>
<dbReference type="KEGG" id="paa:Paes_2040"/>
<dbReference type="eggNOG" id="COG0099">
    <property type="taxonomic scope" value="Bacteria"/>
</dbReference>
<dbReference type="HOGENOM" id="CLU_103849_1_2_10"/>
<dbReference type="Proteomes" id="UP000002725">
    <property type="component" value="Chromosome"/>
</dbReference>
<dbReference type="GO" id="GO:0005829">
    <property type="term" value="C:cytosol"/>
    <property type="evidence" value="ECO:0007669"/>
    <property type="project" value="TreeGrafter"/>
</dbReference>
<dbReference type="GO" id="GO:0015935">
    <property type="term" value="C:small ribosomal subunit"/>
    <property type="evidence" value="ECO:0007669"/>
    <property type="project" value="TreeGrafter"/>
</dbReference>
<dbReference type="GO" id="GO:0019843">
    <property type="term" value="F:rRNA binding"/>
    <property type="evidence" value="ECO:0007669"/>
    <property type="project" value="UniProtKB-UniRule"/>
</dbReference>
<dbReference type="GO" id="GO:0003735">
    <property type="term" value="F:structural constituent of ribosome"/>
    <property type="evidence" value="ECO:0007669"/>
    <property type="project" value="InterPro"/>
</dbReference>
<dbReference type="GO" id="GO:0000049">
    <property type="term" value="F:tRNA binding"/>
    <property type="evidence" value="ECO:0007669"/>
    <property type="project" value="UniProtKB-UniRule"/>
</dbReference>
<dbReference type="GO" id="GO:0006412">
    <property type="term" value="P:translation"/>
    <property type="evidence" value="ECO:0007669"/>
    <property type="project" value="UniProtKB-UniRule"/>
</dbReference>
<dbReference type="FunFam" id="1.10.8.50:FF:000001">
    <property type="entry name" value="30S ribosomal protein S13"/>
    <property type="match status" value="1"/>
</dbReference>
<dbReference type="FunFam" id="4.10.910.10:FF:000001">
    <property type="entry name" value="30S ribosomal protein S13"/>
    <property type="match status" value="1"/>
</dbReference>
<dbReference type="Gene3D" id="1.10.8.50">
    <property type="match status" value="1"/>
</dbReference>
<dbReference type="Gene3D" id="4.10.910.10">
    <property type="entry name" value="30s ribosomal protein s13, domain 2"/>
    <property type="match status" value="1"/>
</dbReference>
<dbReference type="HAMAP" id="MF_01315">
    <property type="entry name" value="Ribosomal_uS13"/>
    <property type="match status" value="1"/>
</dbReference>
<dbReference type="InterPro" id="IPR027437">
    <property type="entry name" value="Rbsml_uS13_C"/>
</dbReference>
<dbReference type="InterPro" id="IPR001892">
    <property type="entry name" value="Ribosomal_uS13"/>
</dbReference>
<dbReference type="InterPro" id="IPR010979">
    <property type="entry name" value="Ribosomal_uS13-like_H2TH"/>
</dbReference>
<dbReference type="InterPro" id="IPR019980">
    <property type="entry name" value="Ribosomal_uS13_bac-type"/>
</dbReference>
<dbReference type="InterPro" id="IPR018269">
    <property type="entry name" value="Ribosomal_uS13_CS"/>
</dbReference>
<dbReference type="NCBIfam" id="TIGR03631">
    <property type="entry name" value="uS13_bact"/>
    <property type="match status" value="1"/>
</dbReference>
<dbReference type="PANTHER" id="PTHR10871">
    <property type="entry name" value="30S RIBOSOMAL PROTEIN S13/40S RIBOSOMAL PROTEIN S18"/>
    <property type="match status" value="1"/>
</dbReference>
<dbReference type="PANTHER" id="PTHR10871:SF1">
    <property type="entry name" value="SMALL RIBOSOMAL SUBUNIT PROTEIN US13M"/>
    <property type="match status" value="1"/>
</dbReference>
<dbReference type="Pfam" id="PF00416">
    <property type="entry name" value="Ribosomal_S13"/>
    <property type="match status" value="1"/>
</dbReference>
<dbReference type="PIRSF" id="PIRSF002134">
    <property type="entry name" value="Ribosomal_S13"/>
    <property type="match status" value="1"/>
</dbReference>
<dbReference type="SUPFAM" id="SSF46946">
    <property type="entry name" value="S13-like H2TH domain"/>
    <property type="match status" value="1"/>
</dbReference>
<dbReference type="PROSITE" id="PS00646">
    <property type="entry name" value="RIBOSOMAL_S13_1"/>
    <property type="match status" value="1"/>
</dbReference>
<dbReference type="PROSITE" id="PS50159">
    <property type="entry name" value="RIBOSOMAL_S13_2"/>
    <property type="match status" value="1"/>
</dbReference>
<feature type="chain" id="PRO_1000141301" description="Small ribosomal subunit protein uS13">
    <location>
        <begin position="1"/>
        <end position="125"/>
    </location>
</feature>
<feature type="region of interest" description="Disordered" evidence="2">
    <location>
        <begin position="94"/>
        <end position="125"/>
    </location>
</feature>
<feature type="compositionally biased region" description="Basic residues" evidence="2">
    <location>
        <begin position="107"/>
        <end position="125"/>
    </location>
</feature>
<gene>
    <name evidence="1" type="primary">rpsM</name>
    <name type="ordered locus">Paes_2040</name>
</gene>
<organism>
    <name type="scientific">Prosthecochloris aestuarii (strain DSM 271 / SK 413)</name>
    <dbReference type="NCBI Taxonomy" id="290512"/>
    <lineage>
        <taxon>Bacteria</taxon>
        <taxon>Pseudomonadati</taxon>
        <taxon>Chlorobiota</taxon>
        <taxon>Chlorobiia</taxon>
        <taxon>Chlorobiales</taxon>
        <taxon>Chlorobiaceae</taxon>
        <taxon>Prosthecochloris</taxon>
    </lineage>
</organism>
<reference key="1">
    <citation type="submission" date="2008-06" db="EMBL/GenBank/DDBJ databases">
        <title>Complete sequence of chromosome of Prosthecochloris aestuarii DSM 271.</title>
        <authorList>
            <consortium name="US DOE Joint Genome Institute"/>
            <person name="Lucas S."/>
            <person name="Copeland A."/>
            <person name="Lapidus A."/>
            <person name="Glavina del Rio T."/>
            <person name="Dalin E."/>
            <person name="Tice H."/>
            <person name="Bruce D."/>
            <person name="Goodwin L."/>
            <person name="Pitluck S."/>
            <person name="Schmutz J."/>
            <person name="Larimer F."/>
            <person name="Land M."/>
            <person name="Hauser L."/>
            <person name="Kyrpides N."/>
            <person name="Anderson I."/>
            <person name="Liu Z."/>
            <person name="Li T."/>
            <person name="Zhao F."/>
            <person name="Overmann J."/>
            <person name="Bryant D.A."/>
            <person name="Richardson P."/>
        </authorList>
    </citation>
    <scope>NUCLEOTIDE SEQUENCE [LARGE SCALE GENOMIC DNA]</scope>
    <source>
        <strain>DSM 271 / SK 413</strain>
    </source>
</reference>
<accession>B4S5A4</accession>
<protein>
    <recommendedName>
        <fullName evidence="1">Small ribosomal subunit protein uS13</fullName>
    </recommendedName>
    <alternativeName>
        <fullName evidence="3">30S ribosomal protein S13</fullName>
    </alternativeName>
</protein>
<sequence>MRIAGVNLPLNKHAVIALTHVYGIGKTSARNILERAGIDPAKKIAEMSDEEAHAIREIIAEEYKVEGQARGLQQLAVKRLMDIGCYRGLRHRRSLPVRGQRTQTNARTRKGKRKTVAGKKKAVKK</sequence>